<organism>
    <name type="scientific">Mycoplasma pneumoniae (strain ATCC 29342 / M129 / Subtype 1)</name>
    <name type="common">Mycoplasmoides pneumoniae</name>
    <dbReference type="NCBI Taxonomy" id="272634"/>
    <lineage>
        <taxon>Bacteria</taxon>
        <taxon>Bacillati</taxon>
        <taxon>Mycoplasmatota</taxon>
        <taxon>Mycoplasmoidales</taxon>
        <taxon>Mycoplasmoidaceae</taxon>
        <taxon>Mycoplasmoides</taxon>
    </lineage>
</organism>
<feature type="chain" id="PRO_0000210663" description="Putative type I restriction enzyme MpnIIP endonuclease subunit middle part">
    <location>
        <begin position="1"/>
        <end position="115"/>
    </location>
</feature>
<evidence type="ECO:0000303" key="1">
    <source>
    </source>
</evidence>
<evidence type="ECO:0000303" key="2">
    <source>
    </source>
</evidence>
<evidence type="ECO:0000305" key="3">
    <source>
    </source>
</evidence>
<evidence type="ECO:0000305" key="4">
    <source>
    </source>
</evidence>
<proteinExistence type="uncertain"/>
<gene>
    <name type="ordered locus">MPN_346</name>
    <name type="ORF">H91_orf115</name>
    <name type="ORF">MP490</name>
</gene>
<reference key="1">
    <citation type="journal article" date="1996" name="Nucleic Acids Res.">
        <title>Complete sequence analysis of the genome of the bacterium Mycoplasma pneumoniae.</title>
        <authorList>
            <person name="Himmelreich R."/>
            <person name="Hilbert H."/>
            <person name="Plagens H."/>
            <person name="Pirkl E."/>
            <person name="Li B.-C."/>
            <person name="Herrmann R."/>
        </authorList>
    </citation>
    <scope>NUCLEOTIDE SEQUENCE [LARGE SCALE GENOMIC DNA]</scope>
    <source>
        <strain>ATCC 29342 / M129 / Subtype 1</strain>
    </source>
</reference>
<reference key="2">
    <citation type="journal article" date="2003" name="Nucleic Acids Res.">
        <title>A nomenclature for restriction enzymes, DNA methyltransferases, homing endonucleases and their genes.</title>
        <authorList>
            <person name="Roberts R.J."/>
            <person name="Belfort M."/>
            <person name="Bestor T."/>
            <person name="Bhagwat A.S."/>
            <person name="Bickle T.A."/>
            <person name="Bitinaite J."/>
            <person name="Blumenthal R.M."/>
            <person name="Degtyarev S.K."/>
            <person name="Dryden D.T."/>
            <person name="Dybvig K."/>
            <person name="Firman K."/>
            <person name="Gromova E.S."/>
            <person name="Gumport R.I."/>
            <person name="Halford S.E."/>
            <person name="Hattman S."/>
            <person name="Heitman J."/>
            <person name="Hornby D.P."/>
            <person name="Janulaitis A."/>
            <person name="Jeltsch A."/>
            <person name="Josephsen J."/>
            <person name="Kiss A."/>
            <person name="Klaenhammer T.R."/>
            <person name="Kobayashi I."/>
            <person name="Kong H."/>
            <person name="Krueger D.H."/>
            <person name="Lacks S."/>
            <person name="Marinus M.G."/>
            <person name="Miyahara M."/>
            <person name="Morgan R.D."/>
            <person name="Murray N.E."/>
            <person name="Nagaraja V."/>
            <person name="Piekarowicz A."/>
            <person name="Pingoud A."/>
            <person name="Raleigh E."/>
            <person name="Rao D.N."/>
            <person name="Reich N."/>
            <person name="Repin V.E."/>
            <person name="Selker E.U."/>
            <person name="Shaw P.C."/>
            <person name="Stein D.C."/>
            <person name="Stoddard B.L."/>
            <person name="Szybalski W."/>
            <person name="Trautner T.A."/>
            <person name="Van Etten J.L."/>
            <person name="Vitor J.M."/>
            <person name="Wilson G.G."/>
            <person name="Xu S.Y."/>
        </authorList>
    </citation>
    <scope>NOMENCLATURE</scope>
</reference>
<reference key="3">
    <citation type="journal article" date="2013" name="PLoS Genet.">
        <title>Comprehensive methylome characterization of Mycoplasma genitalium and Mycoplasma pneumoniae at single-base resolution.</title>
        <authorList>
            <person name="Lluch-Senar M."/>
            <person name="Luong K."/>
            <person name="Llorens-Rico V."/>
            <person name="Delgado J."/>
            <person name="Fang G."/>
            <person name="Spittle K."/>
            <person name="Clark T.A."/>
            <person name="Schadt E."/>
            <person name="Turner S.W."/>
            <person name="Korlach J."/>
            <person name="Serrano L."/>
        </authorList>
    </citation>
    <scope>DISCUSSION OF SEQUENCE</scope>
    <source>
        <strain>ATCC 29342 / M129 / Subtype 1</strain>
    </source>
</reference>
<sequence length="115" mass="13468">MSDALDDENVLCFRYKSYYIKDDGSRIDTLNEERIKHIVDFTLDKYLDATQNTPKFDNFENPVKEGFNSIFACESKEAAIEYYKEFKKQIEQKKLPIKIASIIAQTKVVMNKKLV</sequence>
<name>T1R2_MYCPN</name>
<keyword id="KW-1185">Reference proteome</keyword>
<accession>P75432</accession>
<protein>
    <recommendedName>
        <fullName evidence="1 2">Putative type I restriction enzyme MpnIIP endonuclease subunit middle part</fullName>
        <shortName>R protein middle part</shortName>
    </recommendedName>
</protein>
<comment type="function">
    <text evidence="1 4">The middle section of a putative type I restriction enzyme that if reconstituted might recognize 5'-GAN(7)TAY-3' and cleave a random distance away (Probable). Subunit R is required for both nuclease and ATPase activities, but not for modification (PubMed:12654995).</text>
</comment>
<comment type="caution">
    <text evidence="3 4">Could be the product of a pseudogene; in this organism the endonuclease subunit carries 2 frameshift mutations (resulting in 3 short ORFs) and is probably not expressed.</text>
</comment>
<dbReference type="EMBL" id="U00089">
    <property type="protein sequence ID" value="AAB96138.1"/>
    <property type="molecule type" value="Genomic_DNA"/>
</dbReference>
<dbReference type="PIR" id="S73816">
    <property type="entry name" value="S73816"/>
</dbReference>
<dbReference type="RefSeq" id="NP_110034.1">
    <property type="nucleotide sequence ID" value="NC_000912.1"/>
</dbReference>
<dbReference type="SMR" id="P75432"/>
<dbReference type="IntAct" id="P75432">
    <property type="interactions" value="1"/>
</dbReference>
<dbReference type="STRING" id="272634.MPN_346"/>
<dbReference type="EnsemblBacteria" id="AAB96138">
    <property type="protein sequence ID" value="AAB96138"/>
    <property type="gene ID" value="MPN_346"/>
</dbReference>
<dbReference type="KEGG" id="mpn:MPN_346"/>
<dbReference type="PATRIC" id="fig|272634.6.peg.371"/>
<dbReference type="HOGENOM" id="CLU_2106267_0_0_14"/>
<dbReference type="OrthoDB" id="9758243at2"/>
<dbReference type="BioCyc" id="MPNE272634:G1GJ3-546-MONOMER"/>
<dbReference type="Proteomes" id="UP000000808">
    <property type="component" value="Chromosome"/>
</dbReference>
<dbReference type="Gene3D" id="3.40.50.300">
    <property type="entry name" value="P-loop containing nucleotide triphosphate hydrolases"/>
    <property type="match status" value="1"/>
</dbReference>
<dbReference type="InterPro" id="IPR055180">
    <property type="entry name" value="HsdR_RecA-like_helicase_dom_2"/>
</dbReference>
<dbReference type="InterPro" id="IPR027417">
    <property type="entry name" value="P-loop_NTPase"/>
</dbReference>
<dbReference type="Pfam" id="PF22679">
    <property type="entry name" value="T1R_D3-like"/>
    <property type="match status" value="1"/>
</dbReference>